<keyword id="KW-0325">Glycoprotein</keyword>
<keyword id="KW-0406">Ion transport</keyword>
<keyword id="KW-0472">Membrane</keyword>
<keyword id="KW-1185">Reference proteome</keyword>
<keyword id="KW-0812">Transmembrane</keyword>
<keyword id="KW-1133">Transmembrane helix</keyword>
<keyword id="KW-0813">Transport</keyword>
<dbReference type="EMBL" id="BC080416">
    <property type="protein sequence ID" value="AAH80416.1"/>
    <property type="molecule type" value="mRNA"/>
</dbReference>
<dbReference type="SMR" id="Q66KG0"/>
<dbReference type="GlyCosmos" id="Q66KG0">
    <property type="glycosylation" value="4 sites, No reported glycans"/>
</dbReference>
<dbReference type="AGR" id="Xenbase:XB-GENE-961388"/>
<dbReference type="Xenbase" id="XB-GENE-961388">
    <property type="gene designation" value="slc22a16.L"/>
</dbReference>
<dbReference type="Proteomes" id="UP000186698">
    <property type="component" value="Unplaced"/>
</dbReference>
<dbReference type="GO" id="GO:0016020">
    <property type="term" value="C:membrane"/>
    <property type="evidence" value="ECO:0007669"/>
    <property type="project" value="UniProtKB-SubCell"/>
</dbReference>
<dbReference type="GO" id="GO:0015101">
    <property type="term" value="F:organic cation transmembrane transporter activity"/>
    <property type="evidence" value="ECO:0000318"/>
    <property type="project" value="GO_Central"/>
</dbReference>
<dbReference type="GO" id="GO:0006811">
    <property type="term" value="P:monoatomic ion transport"/>
    <property type="evidence" value="ECO:0007669"/>
    <property type="project" value="UniProtKB-KW"/>
</dbReference>
<dbReference type="GO" id="GO:0015695">
    <property type="term" value="P:organic cation transport"/>
    <property type="evidence" value="ECO:0000318"/>
    <property type="project" value="GO_Central"/>
</dbReference>
<dbReference type="CDD" id="cd17375">
    <property type="entry name" value="MFS_SLC22A16_CT2"/>
    <property type="match status" value="1"/>
</dbReference>
<dbReference type="FunFam" id="1.20.1250.20:FF:000154">
    <property type="entry name" value="Solute carrier family 22 member 16"/>
    <property type="match status" value="1"/>
</dbReference>
<dbReference type="Gene3D" id="1.20.1250.20">
    <property type="entry name" value="MFS general substrate transporter like domains"/>
    <property type="match status" value="1"/>
</dbReference>
<dbReference type="InterPro" id="IPR020846">
    <property type="entry name" value="MFS_dom"/>
</dbReference>
<dbReference type="InterPro" id="IPR005828">
    <property type="entry name" value="MFS_sugar_transport-like"/>
</dbReference>
<dbReference type="InterPro" id="IPR036259">
    <property type="entry name" value="MFS_trans_sf"/>
</dbReference>
<dbReference type="PANTHER" id="PTHR24064">
    <property type="entry name" value="SOLUTE CARRIER FAMILY 22 MEMBER"/>
    <property type="match status" value="1"/>
</dbReference>
<dbReference type="Pfam" id="PF00083">
    <property type="entry name" value="Sugar_tr"/>
    <property type="match status" value="1"/>
</dbReference>
<dbReference type="SUPFAM" id="SSF103473">
    <property type="entry name" value="MFS general substrate transporter"/>
    <property type="match status" value="1"/>
</dbReference>
<dbReference type="PROSITE" id="PS50850">
    <property type="entry name" value="MFS"/>
    <property type="match status" value="1"/>
</dbReference>
<evidence type="ECO:0000250" key="1"/>
<evidence type="ECO:0000255" key="2"/>
<evidence type="ECO:0000305" key="3"/>
<sequence>MEHLFDYVGHFGRFQAYLYFASAFQTISCGIHYLASVFIAVTPKFICRAPGNISTVLLPNASTLRLEDAWESWTSKDYLVVQQENGDIWELNQCSRLKREDASYLTYFYDGNKTLFSCSNGYHYDKSNLESSIVTEWDLVCDREWLAKLIQPIFMLGVLIGAVIFGDIADRVGRRPIIWITSTGQFLFGIAVAFTFDYYSFVIVRFLLAMVSSGYYVVVFVYLTEYVGIKARTWASMHVHAFFAVGVMIVSLVGFLVRTWWIYQIILSLTTLPFVLCCWMLPETPFWLYSQGKYKEVEKLIRTIEKWNKISTPCKLSELCPAQETHVDQPNTLKNHNVLDLFYNWSFARRTITVWLIWFTGSLGYYVFALNSVNLGGNEYLNLFLTGAVEIPSYIVACLGMDKIGRRNTLAPFLIISAVICGVIMLIPQDHSTVTIAMSMAGKFSIAVAFGLIYLYTAELYPTIVRSLAVGSGSMMCRIGSVVAPFCVYLTDVWIFMPQMLVGIMAFLTGILTLTLPETLGIPLTSTMEEAAEMGTTSGITKRKALTESNGVVMEKLDQTTDNAAS</sequence>
<accession>Q66KG0</accession>
<protein>
    <recommendedName>
        <fullName>Solute carrier family 22 member 16</fullName>
    </recommendedName>
    <alternativeName>
        <fullName>Carnitine transporter 2</fullName>
        <shortName>CT2</shortName>
    </alternativeName>
</protein>
<comment type="function">
    <text evidence="1">High affinity carnitine transporter.</text>
</comment>
<comment type="subcellular location">
    <subcellularLocation>
        <location evidence="3">Membrane</location>
        <topology evidence="3">Multi-pass membrane protein</topology>
    </subcellularLocation>
</comment>
<comment type="similarity">
    <text evidence="3">Belongs to the major facilitator (TC 2.A.1) superfamily. Organic cation transporter (TC 2.A.1.19) family.</text>
</comment>
<feature type="chain" id="PRO_0000318993" description="Solute carrier family 22 member 16">
    <location>
        <begin position="1"/>
        <end position="566"/>
    </location>
</feature>
<feature type="transmembrane region" description="Helical" evidence="2">
    <location>
        <begin position="20"/>
        <end position="40"/>
    </location>
</feature>
<feature type="transmembrane region" description="Helical" evidence="2">
    <location>
        <begin position="149"/>
        <end position="169"/>
    </location>
</feature>
<feature type="transmembrane region" description="Helical" evidence="2">
    <location>
        <begin position="176"/>
        <end position="196"/>
    </location>
</feature>
<feature type="transmembrane region" description="Helical" evidence="2">
    <location>
        <begin position="201"/>
        <end position="221"/>
    </location>
</feature>
<feature type="transmembrane region" description="Helical" evidence="2">
    <location>
        <begin position="237"/>
        <end position="257"/>
    </location>
</feature>
<feature type="transmembrane region" description="Helical" evidence="2">
    <location>
        <begin position="261"/>
        <end position="281"/>
    </location>
</feature>
<feature type="transmembrane region" description="Helical" evidence="2">
    <location>
        <begin position="351"/>
        <end position="371"/>
    </location>
</feature>
<feature type="transmembrane region" description="Helical" evidence="2">
    <location>
        <begin position="381"/>
        <end position="401"/>
    </location>
</feature>
<feature type="transmembrane region" description="Helical" evidence="2">
    <location>
        <begin position="408"/>
        <end position="428"/>
    </location>
</feature>
<feature type="transmembrane region" description="Helical" evidence="2">
    <location>
        <begin position="436"/>
        <end position="456"/>
    </location>
</feature>
<feature type="transmembrane region" description="Helical" evidence="2">
    <location>
        <begin position="468"/>
        <end position="488"/>
    </location>
</feature>
<feature type="transmembrane region" description="Helical" evidence="2">
    <location>
        <begin position="493"/>
        <end position="513"/>
    </location>
</feature>
<feature type="glycosylation site" description="N-linked (GlcNAc...) asparagine" evidence="2">
    <location>
        <position position="52"/>
    </location>
</feature>
<feature type="glycosylation site" description="N-linked (GlcNAc...) asparagine" evidence="2">
    <location>
        <position position="60"/>
    </location>
</feature>
<feature type="glycosylation site" description="N-linked (GlcNAc...) asparagine" evidence="2">
    <location>
        <position position="112"/>
    </location>
</feature>
<feature type="glycosylation site" description="N-linked (GlcNAc...) asparagine" evidence="2">
    <location>
        <position position="344"/>
    </location>
</feature>
<proteinExistence type="evidence at transcript level"/>
<reference key="1">
    <citation type="submission" date="2004-08" db="EMBL/GenBank/DDBJ databases">
        <authorList>
            <consortium name="NIH - Xenopus Gene Collection (XGC) project"/>
        </authorList>
    </citation>
    <scope>NUCLEOTIDE SEQUENCE [LARGE SCALE MRNA]</scope>
    <source>
        <tissue>Kidney</tissue>
    </source>
</reference>
<organism>
    <name type="scientific">Xenopus laevis</name>
    <name type="common">African clawed frog</name>
    <dbReference type="NCBI Taxonomy" id="8355"/>
    <lineage>
        <taxon>Eukaryota</taxon>
        <taxon>Metazoa</taxon>
        <taxon>Chordata</taxon>
        <taxon>Craniata</taxon>
        <taxon>Vertebrata</taxon>
        <taxon>Euteleostomi</taxon>
        <taxon>Amphibia</taxon>
        <taxon>Batrachia</taxon>
        <taxon>Anura</taxon>
        <taxon>Pipoidea</taxon>
        <taxon>Pipidae</taxon>
        <taxon>Xenopodinae</taxon>
        <taxon>Xenopus</taxon>
        <taxon>Xenopus</taxon>
    </lineage>
</organism>
<name>S22AG_XENLA</name>
<gene>
    <name type="primary">slc22a16</name>
</gene>